<accession>P10368</accession>
<evidence type="ECO:0000255" key="1">
    <source>
        <dbReference type="HAMAP-Rule" id="MF_01022"/>
    </source>
</evidence>
<evidence type="ECO:0000305" key="2"/>
<name>HIS7_SALTY</name>
<organism>
    <name type="scientific">Salmonella typhimurium (strain LT2 / SGSC1412 / ATCC 700720)</name>
    <dbReference type="NCBI Taxonomy" id="99287"/>
    <lineage>
        <taxon>Bacteria</taxon>
        <taxon>Pseudomonadati</taxon>
        <taxon>Pseudomonadota</taxon>
        <taxon>Gammaproteobacteria</taxon>
        <taxon>Enterobacterales</taxon>
        <taxon>Enterobacteriaceae</taxon>
        <taxon>Salmonella</taxon>
    </lineage>
</organism>
<feature type="chain" id="PRO_0000158220" description="Histidine biosynthesis bifunctional protein HisB">
    <location>
        <begin position="1"/>
        <end position="355"/>
    </location>
</feature>
<feature type="region of interest" description="Histidinol-phosphatase" evidence="1">
    <location>
        <begin position="1"/>
        <end position="166"/>
    </location>
</feature>
<feature type="region of interest" description="Imidazoleglycerol-phosphate dehydratase" evidence="1">
    <location>
        <begin position="167"/>
        <end position="355"/>
    </location>
</feature>
<feature type="active site" description="Nucleophile" evidence="1">
    <location>
        <position position="9"/>
    </location>
</feature>
<feature type="active site" description="Proton donor" evidence="1">
    <location>
        <position position="11"/>
    </location>
</feature>
<feature type="binding site" evidence="1">
    <location>
        <position position="9"/>
    </location>
    <ligand>
        <name>Mg(2+)</name>
        <dbReference type="ChEBI" id="CHEBI:18420"/>
    </ligand>
</feature>
<feature type="binding site" evidence="1">
    <location>
        <position position="11"/>
    </location>
    <ligand>
        <name>Mg(2+)</name>
        <dbReference type="ChEBI" id="CHEBI:18420"/>
    </ligand>
</feature>
<feature type="binding site" evidence="1">
    <location>
        <position position="93"/>
    </location>
    <ligand>
        <name>Zn(2+)</name>
        <dbReference type="ChEBI" id="CHEBI:29105"/>
    </ligand>
</feature>
<feature type="binding site" evidence="1">
    <location>
        <position position="95"/>
    </location>
    <ligand>
        <name>Zn(2+)</name>
        <dbReference type="ChEBI" id="CHEBI:29105"/>
    </ligand>
</feature>
<feature type="binding site" evidence="1">
    <location>
        <position position="101"/>
    </location>
    <ligand>
        <name>Zn(2+)</name>
        <dbReference type="ChEBI" id="CHEBI:29105"/>
    </ligand>
</feature>
<feature type="binding site" evidence="1">
    <location>
        <position position="103"/>
    </location>
    <ligand>
        <name>Zn(2+)</name>
        <dbReference type="ChEBI" id="CHEBI:29105"/>
    </ligand>
</feature>
<feature type="binding site" evidence="1">
    <location>
        <position position="130"/>
    </location>
    <ligand>
        <name>Mg(2+)</name>
        <dbReference type="ChEBI" id="CHEBI:18420"/>
    </ligand>
</feature>
<feature type="sequence conflict" description="In Ref. 1; CAA31825." evidence="2" ref="1">
    <original>F</original>
    <variation>L</variation>
    <location>
        <position position="7"/>
    </location>
</feature>
<feature type="sequence conflict" description="In Ref. 1; CAA31825." evidence="2" ref="1">
    <original>C</original>
    <variation>S</variation>
    <location>
        <position position="86"/>
    </location>
</feature>
<feature type="sequence conflict" description="In Ref. 1; CAA31825." evidence="2" ref="1">
    <original>N</original>
    <variation>S</variation>
    <location>
        <position position="140"/>
    </location>
</feature>
<feature type="sequence conflict" description="In Ref. 1; CAA31825." evidence="2" ref="1">
    <original>G</original>
    <variation>R</variation>
    <location>
        <position position="240"/>
    </location>
</feature>
<feature type="sequence conflict" description="In Ref. 1; CAA31825." evidence="2" ref="1">
    <original>G</original>
    <variation>R</variation>
    <location>
        <position position="248"/>
    </location>
</feature>
<feature type="sequence conflict" description="In Ref. 1; CAA31825." evidence="2" ref="1">
    <location>
        <position position="268"/>
    </location>
</feature>
<feature type="sequence conflict" description="In Ref. 1; CAA31825." evidence="2" ref="1">
    <original>D</original>
    <variation>N</variation>
    <location>
        <position position="292"/>
    </location>
</feature>
<feature type="sequence conflict" description="In Ref. 1; CAA31825." evidence="2" ref="1">
    <original>L</original>
    <variation>V</variation>
    <location>
        <position position="337"/>
    </location>
</feature>
<dbReference type="EC" id="3.1.3.15" evidence="1"/>
<dbReference type="EC" id="4.2.1.19" evidence="1"/>
<dbReference type="EMBL" id="X13464">
    <property type="protein sequence ID" value="CAA31825.1"/>
    <property type="status" value="ALT_INIT"/>
    <property type="molecule type" value="Genomic_DNA"/>
</dbReference>
<dbReference type="EMBL" id="AE006468">
    <property type="protein sequence ID" value="AAL20978.1"/>
    <property type="molecule type" value="Genomic_DNA"/>
</dbReference>
<dbReference type="EMBL" id="J01804">
    <property type="protein sequence ID" value="AAA88617.1"/>
    <property type="molecule type" value="Genomic_DNA"/>
</dbReference>
<dbReference type="PIR" id="JS0159">
    <property type="entry name" value="DWEBHB"/>
</dbReference>
<dbReference type="RefSeq" id="NP_461019.1">
    <property type="nucleotide sequence ID" value="NC_003197.2"/>
</dbReference>
<dbReference type="RefSeq" id="WP_000080044.1">
    <property type="nucleotide sequence ID" value="NC_003197.2"/>
</dbReference>
<dbReference type="SMR" id="P10368"/>
<dbReference type="STRING" id="99287.STM2074"/>
<dbReference type="PaxDb" id="99287-STM2074"/>
<dbReference type="GeneID" id="1253595"/>
<dbReference type="KEGG" id="stm:STM2074"/>
<dbReference type="PATRIC" id="fig|99287.12.peg.2196"/>
<dbReference type="HOGENOM" id="CLU_044308_0_0_6"/>
<dbReference type="OMA" id="PEDTFWP"/>
<dbReference type="PhylomeDB" id="P10368"/>
<dbReference type="BioCyc" id="SENT99287:STM2074-MONOMER"/>
<dbReference type="UniPathway" id="UPA00031">
    <property type="reaction ID" value="UER00011"/>
</dbReference>
<dbReference type="UniPathway" id="UPA00031">
    <property type="reaction ID" value="UER00013"/>
</dbReference>
<dbReference type="Proteomes" id="UP000001014">
    <property type="component" value="Chromosome"/>
</dbReference>
<dbReference type="GO" id="GO:0005737">
    <property type="term" value="C:cytoplasm"/>
    <property type="evidence" value="ECO:0007669"/>
    <property type="project" value="UniProtKB-SubCell"/>
</dbReference>
<dbReference type="GO" id="GO:0004401">
    <property type="term" value="F:histidinol-phosphatase activity"/>
    <property type="evidence" value="ECO:0007669"/>
    <property type="project" value="UniProtKB-UniRule"/>
</dbReference>
<dbReference type="GO" id="GO:0004424">
    <property type="term" value="F:imidazoleglycerol-phosphate dehydratase activity"/>
    <property type="evidence" value="ECO:0000318"/>
    <property type="project" value="GO_Central"/>
</dbReference>
<dbReference type="GO" id="GO:0046872">
    <property type="term" value="F:metal ion binding"/>
    <property type="evidence" value="ECO:0007669"/>
    <property type="project" value="UniProtKB-KW"/>
</dbReference>
<dbReference type="GO" id="GO:0000105">
    <property type="term" value="P:L-histidine biosynthetic process"/>
    <property type="evidence" value="ECO:0000318"/>
    <property type="project" value="GO_Central"/>
</dbReference>
<dbReference type="CDD" id="cd07503">
    <property type="entry name" value="HAD_HisB-N"/>
    <property type="match status" value="1"/>
</dbReference>
<dbReference type="CDD" id="cd07914">
    <property type="entry name" value="IGPD"/>
    <property type="match status" value="1"/>
</dbReference>
<dbReference type="FunFam" id="3.40.50.1000:FF:000061">
    <property type="entry name" value="Histidine biosynthesis bifunctional protein HisB"/>
    <property type="match status" value="1"/>
</dbReference>
<dbReference type="FunFam" id="3.30.230.40:FF:000001">
    <property type="entry name" value="Imidazoleglycerol-phosphate dehydratase HisB"/>
    <property type="match status" value="1"/>
</dbReference>
<dbReference type="FunFam" id="3.30.230.40:FF:000003">
    <property type="entry name" value="Imidazoleglycerol-phosphate dehydratase HisB"/>
    <property type="match status" value="1"/>
</dbReference>
<dbReference type="Gene3D" id="3.40.50.1000">
    <property type="entry name" value="HAD superfamily/HAD-like"/>
    <property type="match status" value="1"/>
</dbReference>
<dbReference type="Gene3D" id="3.30.230.40">
    <property type="entry name" value="Imidazole glycerol phosphate dehydratase, domain 1"/>
    <property type="match status" value="2"/>
</dbReference>
<dbReference type="HAMAP" id="MF_01022">
    <property type="entry name" value="Bifunc_HisB"/>
    <property type="match status" value="1"/>
</dbReference>
<dbReference type="HAMAP" id="MF_00076">
    <property type="entry name" value="HisB"/>
    <property type="match status" value="1"/>
</dbReference>
<dbReference type="InterPro" id="IPR036412">
    <property type="entry name" value="HAD-like_sf"/>
</dbReference>
<dbReference type="InterPro" id="IPR006549">
    <property type="entry name" value="HAD-SF_hydro_IIIA"/>
</dbReference>
<dbReference type="InterPro" id="IPR023214">
    <property type="entry name" value="HAD_sf"/>
</dbReference>
<dbReference type="InterPro" id="IPR020566">
    <property type="entry name" value="His_synth_bifunc_HisB"/>
</dbReference>
<dbReference type="InterPro" id="IPR005954">
    <property type="entry name" value="HisB_N"/>
</dbReference>
<dbReference type="InterPro" id="IPR006543">
    <property type="entry name" value="Histidinol-phos"/>
</dbReference>
<dbReference type="InterPro" id="IPR038494">
    <property type="entry name" value="IGPD_sf"/>
</dbReference>
<dbReference type="InterPro" id="IPR000807">
    <property type="entry name" value="ImidazoleglycerolP_deHydtase"/>
</dbReference>
<dbReference type="InterPro" id="IPR020565">
    <property type="entry name" value="ImidazoleglycerP_deHydtase_CS"/>
</dbReference>
<dbReference type="InterPro" id="IPR020568">
    <property type="entry name" value="Ribosomal_Su5_D2-typ_SF"/>
</dbReference>
<dbReference type="NCBIfam" id="TIGR01662">
    <property type="entry name" value="HAD-SF-IIIA"/>
    <property type="match status" value="1"/>
</dbReference>
<dbReference type="NCBIfam" id="TIGR01261">
    <property type="entry name" value="hisB_Nterm"/>
    <property type="match status" value="1"/>
</dbReference>
<dbReference type="NCBIfam" id="TIGR01656">
    <property type="entry name" value="Histidinol-ppas"/>
    <property type="match status" value="1"/>
</dbReference>
<dbReference type="NCBIfam" id="NF002111">
    <property type="entry name" value="PRK00951.2-1"/>
    <property type="match status" value="1"/>
</dbReference>
<dbReference type="NCBIfam" id="NF002114">
    <property type="entry name" value="PRK00951.2-4"/>
    <property type="match status" value="1"/>
</dbReference>
<dbReference type="NCBIfam" id="NF003937">
    <property type="entry name" value="PRK05446.1"/>
    <property type="match status" value="1"/>
</dbReference>
<dbReference type="PANTHER" id="PTHR23133:SF2">
    <property type="entry name" value="IMIDAZOLEGLYCEROL-PHOSPHATE DEHYDRATASE"/>
    <property type="match status" value="1"/>
</dbReference>
<dbReference type="PANTHER" id="PTHR23133">
    <property type="entry name" value="IMIDAZOLEGLYCEROL-PHOSPHATE DEHYDRATASE HIS7"/>
    <property type="match status" value="1"/>
</dbReference>
<dbReference type="Pfam" id="PF13242">
    <property type="entry name" value="Hydrolase_like"/>
    <property type="match status" value="1"/>
</dbReference>
<dbReference type="Pfam" id="PF00475">
    <property type="entry name" value="IGPD"/>
    <property type="match status" value="1"/>
</dbReference>
<dbReference type="SUPFAM" id="SSF56784">
    <property type="entry name" value="HAD-like"/>
    <property type="match status" value="1"/>
</dbReference>
<dbReference type="SUPFAM" id="SSF54211">
    <property type="entry name" value="Ribosomal protein S5 domain 2-like"/>
    <property type="match status" value="2"/>
</dbReference>
<dbReference type="PROSITE" id="PS00954">
    <property type="entry name" value="IGP_DEHYDRATASE_1"/>
    <property type="match status" value="1"/>
</dbReference>
<dbReference type="PROSITE" id="PS00955">
    <property type="entry name" value="IGP_DEHYDRATASE_2"/>
    <property type="match status" value="1"/>
</dbReference>
<sequence length="355" mass="40183">MSQKYLFIDRDGTLISEPPSDFQVDRFDKLAFEPEVIPVLLKLQKAGFKLVMITNQDGLGTQSFPQADFDGPHNLMMQIFTSQGVCFDEVLICPHLPADDCDCRKPKVKLVERYLAEQAMDSANSYVIGDRATDIQLADNMGITGLRYHRETLNWTMIGEQLTKRDRYAHVVRNTKETQIDVSVWLDREGNSKINTGVGFFDHMLDQIATHGGFRMEITVKGDLYIDDHHTVEDTGLALGEALKLALGDKRGICRFGFVLPMDECLARCALDISGRPHLEYKAEFTYQRVGDLSTEMIEHFFRSLSYTMGVTLHLKTKGKNDHHRVESLFKAFGRTLRQAIRVEGDTLPSSKGVL</sequence>
<gene>
    <name evidence="1" type="primary">hisB</name>
    <name type="ordered locus">STM2074</name>
</gene>
<protein>
    <recommendedName>
        <fullName evidence="1">Histidine biosynthesis bifunctional protein HisB</fullName>
    </recommendedName>
    <domain>
        <recommendedName>
            <fullName evidence="1">Histidinol-phosphatase</fullName>
            <ecNumber evidence="1">3.1.3.15</ecNumber>
        </recommendedName>
    </domain>
    <domain>
        <recommendedName>
            <fullName evidence="1">Imidazoleglycerol-phosphate dehydratase</fullName>
            <shortName evidence="1">IGPD</shortName>
            <ecNumber evidence="1">4.2.1.19</ecNumber>
        </recommendedName>
    </domain>
</protein>
<proteinExistence type="inferred from homology"/>
<comment type="catalytic activity">
    <reaction evidence="1">
        <text>D-erythro-1-(imidazol-4-yl)glycerol 3-phosphate = 3-(imidazol-4-yl)-2-oxopropyl phosphate + H2O</text>
        <dbReference type="Rhea" id="RHEA:11040"/>
        <dbReference type="ChEBI" id="CHEBI:15377"/>
        <dbReference type="ChEBI" id="CHEBI:57766"/>
        <dbReference type="ChEBI" id="CHEBI:58278"/>
        <dbReference type="EC" id="4.2.1.19"/>
    </reaction>
</comment>
<comment type="catalytic activity">
    <reaction evidence="1">
        <text>L-histidinol phosphate + H2O = L-histidinol + phosphate</text>
        <dbReference type="Rhea" id="RHEA:14465"/>
        <dbReference type="ChEBI" id="CHEBI:15377"/>
        <dbReference type="ChEBI" id="CHEBI:43474"/>
        <dbReference type="ChEBI" id="CHEBI:57699"/>
        <dbReference type="ChEBI" id="CHEBI:57980"/>
        <dbReference type="EC" id="3.1.3.15"/>
    </reaction>
</comment>
<comment type="cofactor">
    <cofactor evidence="1">
        <name>Mg(2+)</name>
        <dbReference type="ChEBI" id="CHEBI:18420"/>
    </cofactor>
</comment>
<comment type="cofactor">
    <cofactor evidence="1">
        <name>Zn(2+)</name>
        <dbReference type="ChEBI" id="CHEBI:29105"/>
    </cofactor>
</comment>
<comment type="pathway">
    <text evidence="1">Amino-acid biosynthesis; L-histidine biosynthesis; L-histidine from 5-phospho-alpha-D-ribose 1-diphosphate: step 6/9.</text>
</comment>
<comment type="pathway">
    <text evidence="1">Amino-acid biosynthesis; L-histidine biosynthesis; L-histidine from 5-phospho-alpha-D-ribose 1-diphosphate: step 8/9.</text>
</comment>
<comment type="subcellular location">
    <subcellularLocation>
        <location evidence="1">Cytoplasm</location>
    </subcellularLocation>
</comment>
<comment type="similarity">
    <text evidence="1">In the N-terminal section; belongs to the histidinol-phosphatase family.</text>
</comment>
<comment type="similarity">
    <text evidence="1">In the C-terminal section; belongs to the imidazoleglycerol-phosphate dehydratase family.</text>
</comment>
<comment type="sequence caution" evidence="2">
    <conflict type="erroneous initiation">
        <sequence resource="EMBL-CDS" id="CAA31825"/>
    </conflict>
</comment>
<reference key="1">
    <citation type="journal article" date="1988" name="J. Mol. Biol.">
        <title>Structure and function of the Salmonella typhimurium and Escherichia coli K-12 histidine operons.</title>
        <authorList>
            <person name="Carlomagno M.S."/>
            <person name="Chiariotti L."/>
            <person name="Alifano P."/>
            <person name="Nappo A.G."/>
            <person name="Bruni C.B."/>
        </authorList>
    </citation>
    <scope>NUCLEOTIDE SEQUENCE [GENOMIC DNA]</scope>
    <source>
        <strain>LT2</strain>
    </source>
</reference>
<reference key="2">
    <citation type="journal article" date="2001" name="Nature">
        <title>Complete genome sequence of Salmonella enterica serovar Typhimurium LT2.</title>
        <authorList>
            <person name="McClelland M."/>
            <person name="Sanderson K.E."/>
            <person name="Spieth J."/>
            <person name="Clifton S.W."/>
            <person name="Latreille P."/>
            <person name="Courtney L."/>
            <person name="Porwollik S."/>
            <person name="Ali J."/>
            <person name="Dante M."/>
            <person name="Du F."/>
            <person name="Hou S."/>
            <person name="Layman D."/>
            <person name="Leonard S."/>
            <person name="Nguyen C."/>
            <person name="Scott K."/>
            <person name="Holmes A."/>
            <person name="Grewal N."/>
            <person name="Mulvaney E."/>
            <person name="Ryan E."/>
            <person name="Sun H."/>
            <person name="Florea L."/>
            <person name="Miller W."/>
            <person name="Stoneking T."/>
            <person name="Nhan M."/>
            <person name="Waterston R."/>
            <person name="Wilson R.K."/>
        </authorList>
    </citation>
    <scope>NUCLEOTIDE SEQUENCE [LARGE SCALE GENOMIC DNA]</scope>
    <source>
        <strain>LT2 / SGSC1412 / ATCC 700720</strain>
    </source>
</reference>
<reference key="3">
    <citation type="submission" date="1989-08" db="EMBL/GenBank/DDBJ databases">
        <authorList>
            <person name="Barnes W.M."/>
            <person name="Husson R.N."/>
            <person name="Whittier R."/>
        </authorList>
    </citation>
    <scope>NUCLEOTIDE SEQUENCE [GENOMIC DNA] OF 1-54</scope>
    <source>
        <strain>LT2</strain>
    </source>
</reference>
<keyword id="KW-0028">Amino-acid biosynthesis</keyword>
<keyword id="KW-0963">Cytoplasm</keyword>
<keyword id="KW-0368">Histidine biosynthesis</keyword>
<keyword id="KW-0378">Hydrolase</keyword>
<keyword id="KW-0456">Lyase</keyword>
<keyword id="KW-0460">Magnesium</keyword>
<keyword id="KW-0479">Metal-binding</keyword>
<keyword id="KW-0511">Multifunctional enzyme</keyword>
<keyword id="KW-1185">Reference proteome</keyword>
<keyword id="KW-0862">Zinc</keyword>